<accession>O68616</accession>
<evidence type="ECO:0000255" key="1">
    <source>
        <dbReference type="HAMAP-Rule" id="MF_01392"/>
    </source>
</evidence>
<name>CCS1_PICP2</name>
<proteinExistence type="inferred from homology"/>
<keyword id="KW-0201">Cytochrome c-type biogenesis</keyword>
<keyword id="KW-0472">Membrane</keyword>
<keyword id="KW-1185">Reference proteome</keyword>
<keyword id="KW-0793">Thylakoid</keyword>
<keyword id="KW-0812">Transmembrane</keyword>
<keyword id="KW-1133">Transmembrane helix</keyword>
<protein>
    <recommendedName>
        <fullName evidence="1">Cytochrome c biogenesis protein CcsB</fullName>
    </recommendedName>
</protein>
<sequence length="462" mass="51396">MTVSDSSPNSPWHSFPRKVWRTGLKWIADLRVAIALLLLISVFSILGTVIEQGSTIQFYQENYPEDPALLGFLSWKVLLGLGLDHVYTTWWYLVLLLAFGVSLIACTFRRQLPALKTARNWNYYSQARQFNKLALSTELDHGSLQSLKPQLEKKRYKIFQDGEKLYARKGIVGRIGPIIVHIGMIVTLVGSIWGAFGGFMAQEMIPSGVNFKVNNVFKAGIFSESDRPWSVNVNRFWIDYTPTGDIDQFYSDLSVVDGEGQELERKTISVNHPLRYDGITFYQTSWSIGGVQVQLNNSPIFQLPAAQIPTENGAKLWGSWVPIKPDMSAGVSILMQDLQGSAIVYNEQGELVGAVRVGDRLDVGDISLKLVDLVGSTGLQIKADPGVPVVYTGFLLVMLGVVMSYVSYSQVWALAAGDRFYLGGKTNRAQVAFERELLEIINTLETSHSQATPENTLTSIEQ</sequence>
<feature type="chain" id="PRO_0000363627" description="Cytochrome c biogenesis protein CcsB">
    <location>
        <begin position="1"/>
        <end position="462"/>
    </location>
</feature>
<feature type="transmembrane region" description="Helical" evidence="1">
    <location>
        <begin position="30"/>
        <end position="50"/>
    </location>
</feature>
<feature type="transmembrane region" description="Helical" evidence="1">
    <location>
        <begin position="89"/>
        <end position="109"/>
    </location>
</feature>
<feature type="transmembrane region" description="Helical" evidence="1">
    <location>
        <begin position="175"/>
        <end position="195"/>
    </location>
</feature>
<comment type="function">
    <text evidence="1">Required during biogenesis of c-type cytochromes (cytochrome c6 and cytochrome f) at the step of heme attachment.</text>
</comment>
<comment type="subunit">
    <text evidence="1">May interact with CcsA.</text>
</comment>
<comment type="subcellular location">
    <subcellularLocation>
        <location evidence="1">Cellular thylakoid membrane</location>
        <topology evidence="1">Multi-pass membrane protein</topology>
    </subcellularLocation>
</comment>
<comment type="similarity">
    <text evidence="1">Belongs to the Ccs1/CcsB family.</text>
</comment>
<reference key="1">
    <citation type="submission" date="1998-03" db="EMBL/GenBank/DDBJ databases">
        <authorList>
            <person name="Inoue K."/>
            <person name="Shen G."/>
            <person name="Long W.P."/>
            <person name="Bryant D.A."/>
            <person name="Sodeinde O.A."/>
        </authorList>
    </citation>
    <scope>NUCLEOTIDE SEQUENCE [GENOMIC DNA]</scope>
</reference>
<reference key="2">
    <citation type="submission" date="2008-02" db="EMBL/GenBank/DDBJ databases">
        <title>Complete sequence of Synechococcus sp. PCC 7002.</title>
        <authorList>
            <person name="Li T."/>
            <person name="Zhao J."/>
            <person name="Zhao C."/>
            <person name="Liu Z."/>
            <person name="Zhao F."/>
            <person name="Marquardt J."/>
            <person name="Nomura C.T."/>
            <person name="Persson S."/>
            <person name="Detter J.C."/>
            <person name="Richardson P.M."/>
            <person name="Lanz C."/>
            <person name="Schuster S.C."/>
            <person name="Wang J."/>
            <person name="Li S."/>
            <person name="Huang X."/>
            <person name="Cai T."/>
            <person name="Yu Z."/>
            <person name="Luo J."/>
            <person name="Zhao J."/>
            <person name="Bryant D.A."/>
        </authorList>
    </citation>
    <scope>NUCLEOTIDE SEQUENCE [LARGE SCALE GENOMIC DNA]</scope>
    <source>
        <strain>ATCC 27264 / PCC 7002 / PR-6</strain>
    </source>
</reference>
<dbReference type="EMBL" id="AF052290">
    <property type="protein sequence ID" value="AAC18975.1"/>
    <property type="molecule type" value="Genomic_DNA"/>
</dbReference>
<dbReference type="EMBL" id="CP000951">
    <property type="protein sequence ID" value="ACA99090.1"/>
    <property type="molecule type" value="Genomic_DNA"/>
</dbReference>
<dbReference type="RefSeq" id="WP_012306713.1">
    <property type="nucleotide sequence ID" value="NZ_JAHHPU010000001.1"/>
</dbReference>
<dbReference type="STRING" id="32049.SYNPCC7002_A1088"/>
<dbReference type="KEGG" id="syp:SYNPCC7002_A1088"/>
<dbReference type="eggNOG" id="COG1333">
    <property type="taxonomic scope" value="Bacteria"/>
</dbReference>
<dbReference type="HOGENOM" id="CLU_034630_0_0_3"/>
<dbReference type="Proteomes" id="UP000001688">
    <property type="component" value="Chromosome"/>
</dbReference>
<dbReference type="GO" id="GO:0031676">
    <property type="term" value="C:plasma membrane-derived thylakoid membrane"/>
    <property type="evidence" value="ECO:0007669"/>
    <property type="project" value="UniProtKB-SubCell"/>
</dbReference>
<dbReference type="GO" id="GO:0017004">
    <property type="term" value="P:cytochrome complex assembly"/>
    <property type="evidence" value="ECO:0007669"/>
    <property type="project" value="UniProtKB-UniRule"/>
</dbReference>
<dbReference type="HAMAP" id="MF_01392">
    <property type="entry name" value="CytC_Ccs1"/>
    <property type="match status" value="1"/>
</dbReference>
<dbReference type="InterPro" id="IPR023494">
    <property type="entry name" value="Cyt_c_bgen_Ccs1/CcsB/ResB"/>
</dbReference>
<dbReference type="InterPro" id="IPR007816">
    <property type="entry name" value="ResB-like_domain"/>
</dbReference>
<dbReference type="PANTHER" id="PTHR31566">
    <property type="entry name" value="CYTOCHROME C BIOGENESIS PROTEIN CCS1, CHLOROPLASTIC"/>
    <property type="match status" value="1"/>
</dbReference>
<dbReference type="PANTHER" id="PTHR31566:SF0">
    <property type="entry name" value="CYTOCHROME C BIOGENESIS PROTEIN CCS1, CHLOROPLASTIC"/>
    <property type="match status" value="1"/>
</dbReference>
<dbReference type="Pfam" id="PF05140">
    <property type="entry name" value="ResB"/>
    <property type="match status" value="2"/>
</dbReference>
<gene>
    <name evidence="1" type="primary">ccsB</name>
    <name evidence="1" type="synonym">ccs1</name>
    <name type="ordered locus">SYNPCC7002_A1088</name>
</gene>
<organism>
    <name type="scientific">Picosynechococcus sp. (strain ATCC 27264 / PCC 7002 / PR-6)</name>
    <name type="common">Agmenellum quadruplicatum</name>
    <dbReference type="NCBI Taxonomy" id="32049"/>
    <lineage>
        <taxon>Bacteria</taxon>
        <taxon>Bacillati</taxon>
        <taxon>Cyanobacteriota</taxon>
        <taxon>Cyanophyceae</taxon>
        <taxon>Oscillatoriophycideae</taxon>
        <taxon>Chroococcales</taxon>
        <taxon>Geminocystaceae</taxon>
        <taxon>Picosynechococcus</taxon>
    </lineage>
</organism>